<accession>A3KMP2</accession>
<accession>Q05C02</accession>
<accession>Q05CK3</accession>
<accession>Q3UZU5</accession>
<sequence>MSLRDCQAWKNAGLPLSTTSNEACKLFDATLTQYVKWTNDKSLGGIEGCLSKLRAADPTFAMGLAISNGLVLVGTGTSVALDKDLALAVKTMVELSQTQTLTPREQLHVSAVEMFAKGNFPRACDLWEQILRDHPTDMLALKFSHDAYFYLGYQEQMRDSVARVYPFWTPDIPLNSYVKGIYSFGLMETNFYDQAQKLAKEALSIEPTDAWSVHTVAHVHEMRAEIKDGLEFMQQSEGHWKDSDMLACHNYWHWALYLIEKGDYEAALTIYDSHILPSLQASGTMLDVVDSCSMLYRLQMEGVPLGQRWQTVLPVTQKHTRDHILLFNDAHFLMASLGARDLQTTRELLTTLQEASKSPGENCQHQLAKDVGLPLCQALLEAENGNPDRVLELLLPIRYRIVQIGGSNAQRDVFNQLLIHAAMTCTSSVHKNVARSLLMERDALKPNSPLTERLIRRAAAVHLMQ</sequence>
<dbReference type="EMBL" id="AK133636">
    <property type="protein sequence ID" value="BAE21760.1"/>
    <property type="molecule type" value="mRNA"/>
</dbReference>
<dbReference type="EMBL" id="BC024550">
    <property type="protein sequence ID" value="AAH24550.1"/>
    <property type="status" value="ALT_INIT"/>
    <property type="molecule type" value="mRNA"/>
</dbReference>
<dbReference type="EMBL" id="BC030849">
    <property type="protein sequence ID" value="AAH30849.1"/>
    <property type="status" value="ALT_INIT"/>
    <property type="molecule type" value="mRNA"/>
</dbReference>
<dbReference type="EMBL" id="BC132621">
    <property type="protein sequence ID" value="AAI32622.2"/>
    <property type="molecule type" value="mRNA"/>
</dbReference>
<dbReference type="EMBL" id="BC132623">
    <property type="protein sequence ID" value="AAI32624.2"/>
    <property type="molecule type" value="mRNA"/>
</dbReference>
<dbReference type="CCDS" id="CCDS27724.2">
    <molecule id="A3KMP2-1"/>
</dbReference>
<dbReference type="RefSeq" id="NP_001028509.2">
    <molecule id="A3KMP2-1"/>
    <property type="nucleotide sequence ID" value="NM_001033337.5"/>
</dbReference>
<dbReference type="RefSeq" id="NP_001402984.1">
    <molecule id="A3KMP2-2"/>
    <property type="nucleotide sequence ID" value="NM_001416055.1"/>
</dbReference>
<dbReference type="RefSeq" id="NP_001402985.1">
    <molecule id="A3KMP2-2"/>
    <property type="nucleotide sequence ID" value="NM_001416056.1"/>
</dbReference>
<dbReference type="RefSeq" id="XP_006521015.1">
    <property type="nucleotide sequence ID" value="XM_006520952.2"/>
</dbReference>
<dbReference type="RefSeq" id="XP_006521016.1">
    <property type="nucleotide sequence ID" value="XM_006520953.3"/>
</dbReference>
<dbReference type="SMR" id="A3KMP2"/>
<dbReference type="FunCoup" id="A3KMP2">
    <property type="interactions" value="293"/>
</dbReference>
<dbReference type="STRING" id="10090.ENSMUSP00000114504"/>
<dbReference type="GlyGen" id="A3KMP2">
    <property type="glycosylation" value="1 site"/>
</dbReference>
<dbReference type="iPTMnet" id="A3KMP2"/>
<dbReference type="PhosphoSitePlus" id="A3KMP2"/>
<dbReference type="SwissPalm" id="A3KMP2"/>
<dbReference type="REPRODUCTION-2DPAGE" id="A3KMP2"/>
<dbReference type="jPOST" id="A3KMP2"/>
<dbReference type="PaxDb" id="10090-ENSMUSP00000114504"/>
<dbReference type="PeptideAtlas" id="A3KMP2"/>
<dbReference type="ProteomicsDB" id="298008">
    <molecule id="A3KMP2-1"/>
</dbReference>
<dbReference type="ProteomicsDB" id="298009">
    <molecule id="A3KMP2-2"/>
</dbReference>
<dbReference type="Pumba" id="A3KMP2"/>
<dbReference type="Antibodypedia" id="28031">
    <property type="antibodies" value="46 antibodies from 14 providers"/>
</dbReference>
<dbReference type="Ensembl" id="ENSMUST00000146088.8">
    <molecule id="A3KMP2-1"/>
    <property type="protein sequence ID" value="ENSMUSP00000114504.2"/>
    <property type="gene ID" value="ENSMUSG00000035944.18"/>
</dbReference>
<dbReference type="GeneID" id="239570"/>
<dbReference type="KEGG" id="mmu:239570"/>
<dbReference type="UCSC" id="uc007xdn.2">
    <molecule id="A3KMP2-1"/>
    <property type="organism name" value="mouse"/>
</dbReference>
<dbReference type="AGR" id="MGI:2146198"/>
<dbReference type="CTD" id="55020"/>
<dbReference type="MGI" id="MGI:2146198">
    <property type="gene designation" value="Ttc38"/>
</dbReference>
<dbReference type="VEuPathDB" id="HostDB:ENSMUSG00000035944"/>
<dbReference type="eggNOG" id="KOG2610">
    <property type="taxonomic scope" value="Eukaryota"/>
</dbReference>
<dbReference type="GeneTree" id="ENSGT00390000002669"/>
<dbReference type="HOGENOM" id="CLU_029972_1_1_1"/>
<dbReference type="InParanoid" id="A3KMP2"/>
<dbReference type="OMA" id="YAFNDVH"/>
<dbReference type="OrthoDB" id="1427555at2759"/>
<dbReference type="PhylomeDB" id="A3KMP2"/>
<dbReference type="TreeFam" id="TF313343"/>
<dbReference type="BioGRID-ORCS" id="239570">
    <property type="hits" value="1 hit in 77 CRISPR screens"/>
</dbReference>
<dbReference type="ChiTaRS" id="Ttc38">
    <property type="organism name" value="mouse"/>
</dbReference>
<dbReference type="PRO" id="PR:A3KMP2"/>
<dbReference type="Proteomes" id="UP000000589">
    <property type="component" value="Chromosome 15"/>
</dbReference>
<dbReference type="RNAct" id="A3KMP2">
    <property type="molecule type" value="protein"/>
</dbReference>
<dbReference type="Bgee" id="ENSMUSG00000035944">
    <property type="expression patterns" value="Expressed in right kidney and 83 other cell types or tissues"/>
</dbReference>
<dbReference type="ExpressionAtlas" id="A3KMP2">
    <property type="expression patterns" value="baseline and differential"/>
</dbReference>
<dbReference type="CDD" id="cd05804">
    <property type="entry name" value="StaR_like"/>
    <property type="match status" value="1"/>
</dbReference>
<dbReference type="Gene3D" id="1.25.40.10">
    <property type="entry name" value="Tetratricopeptide repeat domain"/>
    <property type="match status" value="1"/>
</dbReference>
<dbReference type="InterPro" id="IPR011990">
    <property type="entry name" value="TPR-like_helical_dom_sf"/>
</dbReference>
<dbReference type="InterPro" id="IPR033891">
    <property type="entry name" value="TTC38"/>
</dbReference>
<dbReference type="PANTHER" id="PTHR16263">
    <property type="entry name" value="TETRATRICOPEPTIDE REPEAT PROTEIN 38"/>
    <property type="match status" value="1"/>
</dbReference>
<dbReference type="PANTHER" id="PTHR16263:SF4">
    <property type="entry name" value="TETRATRICOPEPTIDE REPEAT PROTEIN 38"/>
    <property type="match status" value="1"/>
</dbReference>
<dbReference type="SUPFAM" id="SSF48452">
    <property type="entry name" value="TPR-like"/>
    <property type="match status" value="1"/>
</dbReference>
<keyword id="KW-0025">Alternative splicing</keyword>
<keyword id="KW-1185">Reference proteome</keyword>
<keyword id="KW-0677">Repeat</keyword>
<keyword id="KW-0802">TPR repeat</keyword>
<feature type="chain" id="PRO_0000321531" description="Tetratricopeptide repeat protein 38">
    <location>
        <begin position="1"/>
        <end position="465"/>
    </location>
</feature>
<feature type="repeat" description="TPR 1">
    <location>
        <begin position="104"/>
        <end position="137"/>
    </location>
</feature>
<feature type="repeat" description="TPR 2">
    <location>
        <begin position="176"/>
        <end position="209"/>
    </location>
</feature>
<feature type="repeat" description="TPR 3">
    <location>
        <begin position="248"/>
        <end position="281"/>
    </location>
</feature>
<feature type="splice variant" id="VSP_031791" description="In isoform 2." evidence="1">
    <location>
        <begin position="1"/>
        <end position="186"/>
    </location>
</feature>
<protein>
    <recommendedName>
        <fullName>Tetratricopeptide repeat protein 38</fullName>
        <shortName>TPR repeat protein 38</shortName>
    </recommendedName>
</protein>
<proteinExistence type="evidence at protein level"/>
<comment type="alternative products">
    <event type="alternative splicing"/>
    <isoform>
        <id>A3KMP2-1</id>
        <name>1</name>
        <sequence type="displayed"/>
    </isoform>
    <isoform>
        <id>A3KMP2-2</id>
        <name>2</name>
        <sequence type="described" ref="VSP_031791"/>
    </isoform>
</comment>
<comment type="similarity">
    <text evidence="2">Belongs to the TTC38 family.</text>
</comment>
<comment type="sequence caution" evidence="2">
    <conflict type="erroneous initiation">
        <sequence resource="EMBL-CDS" id="AAH24550"/>
    </conflict>
</comment>
<comment type="sequence caution" evidence="2">
    <conflict type="erroneous initiation">
        <sequence resource="EMBL-CDS" id="AAH30849"/>
    </conflict>
</comment>
<organism>
    <name type="scientific">Mus musculus</name>
    <name type="common">Mouse</name>
    <dbReference type="NCBI Taxonomy" id="10090"/>
    <lineage>
        <taxon>Eukaryota</taxon>
        <taxon>Metazoa</taxon>
        <taxon>Chordata</taxon>
        <taxon>Craniata</taxon>
        <taxon>Vertebrata</taxon>
        <taxon>Euteleostomi</taxon>
        <taxon>Mammalia</taxon>
        <taxon>Eutheria</taxon>
        <taxon>Euarchontoglires</taxon>
        <taxon>Glires</taxon>
        <taxon>Rodentia</taxon>
        <taxon>Myomorpha</taxon>
        <taxon>Muroidea</taxon>
        <taxon>Muridae</taxon>
        <taxon>Murinae</taxon>
        <taxon>Mus</taxon>
        <taxon>Mus</taxon>
    </lineage>
</organism>
<reference key="1">
    <citation type="journal article" date="2005" name="Science">
        <title>The transcriptional landscape of the mammalian genome.</title>
        <authorList>
            <person name="Carninci P."/>
            <person name="Kasukawa T."/>
            <person name="Katayama S."/>
            <person name="Gough J."/>
            <person name="Frith M.C."/>
            <person name="Maeda N."/>
            <person name="Oyama R."/>
            <person name="Ravasi T."/>
            <person name="Lenhard B."/>
            <person name="Wells C."/>
            <person name="Kodzius R."/>
            <person name="Shimokawa K."/>
            <person name="Bajic V.B."/>
            <person name="Brenner S.E."/>
            <person name="Batalov S."/>
            <person name="Forrest A.R."/>
            <person name="Zavolan M."/>
            <person name="Davis M.J."/>
            <person name="Wilming L.G."/>
            <person name="Aidinis V."/>
            <person name="Allen J.E."/>
            <person name="Ambesi-Impiombato A."/>
            <person name="Apweiler R."/>
            <person name="Aturaliya R.N."/>
            <person name="Bailey T.L."/>
            <person name="Bansal M."/>
            <person name="Baxter L."/>
            <person name="Beisel K.W."/>
            <person name="Bersano T."/>
            <person name="Bono H."/>
            <person name="Chalk A.M."/>
            <person name="Chiu K.P."/>
            <person name="Choudhary V."/>
            <person name="Christoffels A."/>
            <person name="Clutterbuck D.R."/>
            <person name="Crowe M.L."/>
            <person name="Dalla E."/>
            <person name="Dalrymple B.P."/>
            <person name="de Bono B."/>
            <person name="Della Gatta G."/>
            <person name="di Bernardo D."/>
            <person name="Down T."/>
            <person name="Engstrom P."/>
            <person name="Fagiolini M."/>
            <person name="Faulkner G."/>
            <person name="Fletcher C.F."/>
            <person name="Fukushima T."/>
            <person name="Furuno M."/>
            <person name="Futaki S."/>
            <person name="Gariboldi M."/>
            <person name="Georgii-Hemming P."/>
            <person name="Gingeras T.R."/>
            <person name="Gojobori T."/>
            <person name="Green R.E."/>
            <person name="Gustincich S."/>
            <person name="Harbers M."/>
            <person name="Hayashi Y."/>
            <person name="Hensch T.K."/>
            <person name="Hirokawa N."/>
            <person name="Hill D."/>
            <person name="Huminiecki L."/>
            <person name="Iacono M."/>
            <person name="Ikeo K."/>
            <person name="Iwama A."/>
            <person name="Ishikawa T."/>
            <person name="Jakt M."/>
            <person name="Kanapin A."/>
            <person name="Katoh M."/>
            <person name="Kawasawa Y."/>
            <person name="Kelso J."/>
            <person name="Kitamura H."/>
            <person name="Kitano H."/>
            <person name="Kollias G."/>
            <person name="Krishnan S.P."/>
            <person name="Kruger A."/>
            <person name="Kummerfeld S.K."/>
            <person name="Kurochkin I.V."/>
            <person name="Lareau L.F."/>
            <person name="Lazarevic D."/>
            <person name="Lipovich L."/>
            <person name="Liu J."/>
            <person name="Liuni S."/>
            <person name="McWilliam S."/>
            <person name="Madan Babu M."/>
            <person name="Madera M."/>
            <person name="Marchionni L."/>
            <person name="Matsuda H."/>
            <person name="Matsuzawa S."/>
            <person name="Miki H."/>
            <person name="Mignone F."/>
            <person name="Miyake S."/>
            <person name="Morris K."/>
            <person name="Mottagui-Tabar S."/>
            <person name="Mulder N."/>
            <person name="Nakano N."/>
            <person name="Nakauchi H."/>
            <person name="Ng P."/>
            <person name="Nilsson R."/>
            <person name="Nishiguchi S."/>
            <person name="Nishikawa S."/>
            <person name="Nori F."/>
            <person name="Ohara O."/>
            <person name="Okazaki Y."/>
            <person name="Orlando V."/>
            <person name="Pang K.C."/>
            <person name="Pavan W.J."/>
            <person name="Pavesi G."/>
            <person name="Pesole G."/>
            <person name="Petrovsky N."/>
            <person name="Piazza S."/>
            <person name="Reed J."/>
            <person name="Reid J.F."/>
            <person name="Ring B.Z."/>
            <person name="Ringwald M."/>
            <person name="Rost B."/>
            <person name="Ruan Y."/>
            <person name="Salzberg S.L."/>
            <person name="Sandelin A."/>
            <person name="Schneider C."/>
            <person name="Schoenbach C."/>
            <person name="Sekiguchi K."/>
            <person name="Semple C.A."/>
            <person name="Seno S."/>
            <person name="Sessa L."/>
            <person name="Sheng Y."/>
            <person name="Shibata Y."/>
            <person name="Shimada H."/>
            <person name="Shimada K."/>
            <person name="Silva D."/>
            <person name="Sinclair B."/>
            <person name="Sperling S."/>
            <person name="Stupka E."/>
            <person name="Sugiura K."/>
            <person name="Sultana R."/>
            <person name="Takenaka Y."/>
            <person name="Taki K."/>
            <person name="Tammoja K."/>
            <person name="Tan S.L."/>
            <person name="Tang S."/>
            <person name="Taylor M.S."/>
            <person name="Tegner J."/>
            <person name="Teichmann S.A."/>
            <person name="Ueda H.R."/>
            <person name="van Nimwegen E."/>
            <person name="Verardo R."/>
            <person name="Wei C.L."/>
            <person name="Yagi K."/>
            <person name="Yamanishi H."/>
            <person name="Zabarovsky E."/>
            <person name="Zhu S."/>
            <person name="Zimmer A."/>
            <person name="Hide W."/>
            <person name="Bult C."/>
            <person name="Grimmond S.M."/>
            <person name="Teasdale R.D."/>
            <person name="Liu E.T."/>
            <person name="Brusic V."/>
            <person name="Quackenbush J."/>
            <person name="Wahlestedt C."/>
            <person name="Mattick J.S."/>
            <person name="Hume D.A."/>
            <person name="Kai C."/>
            <person name="Sasaki D."/>
            <person name="Tomaru Y."/>
            <person name="Fukuda S."/>
            <person name="Kanamori-Katayama M."/>
            <person name="Suzuki M."/>
            <person name="Aoki J."/>
            <person name="Arakawa T."/>
            <person name="Iida J."/>
            <person name="Imamura K."/>
            <person name="Itoh M."/>
            <person name="Kato T."/>
            <person name="Kawaji H."/>
            <person name="Kawagashira N."/>
            <person name="Kawashima T."/>
            <person name="Kojima M."/>
            <person name="Kondo S."/>
            <person name="Konno H."/>
            <person name="Nakano K."/>
            <person name="Ninomiya N."/>
            <person name="Nishio T."/>
            <person name="Okada M."/>
            <person name="Plessy C."/>
            <person name="Shibata K."/>
            <person name="Shiraki T."/>
            <person name="Suzuki S."/>
            <person name="Tagami M."/>
            <person name="Waki K."/>
            <person name="Watahiki A."/>
            <person name="Okamura-Oho Y."/>
            <person name="Suzuki H."/>
            <person name="Kawai J."/>
            <person name="Hayashizaki Y."/>
        </authorList>
    </citation>
    <scope>NUCLEOTIDE SEQUENCE [LARGE SCALE MRNA] (ISOFORM 2)</scope>
    <source>
        <strain>C57BL/6J</strain>
        <tissue>Pituitary</tissue>
    </source>
</reference>
<reference key="2">
    <citation type="journal article" date="2004" name="Genome Res.">
        <title>The status, quality, and expansion of the NIH full-length cDNA project: the Mammalian Gene Collection (MGC).</title>
        <authorList>
            <consortium name="The MGC Project Team"/>
        </authorList>
    </citation>
    <scope>NUCLEOTIDE SEQUENCE [LARGE SCALE MRNA] (ISOFORM 1)</scope>
    <source>
        <strain>FVB/N</strain>
        <tissue>Brain</tissue>
        <tissue>Colon</tissue>
        <tissue>Salivary gland</tissue>
    </source>
</reference>
<reference key="3">
    <citation type="journal article" date="2010" name="Cell">
        <title>A tissue-specific atlas of mouse protein phosphorylation and expression.</title>
        <authorList>
            <person name="Huttlin E.L."/>
            <person name="Jedrychowski M.P."/>
            <person name="Elias J.E."/>
            <person name="Goswami T."/>
            <person name="Rad R."/>
            <person name="Beausoleil S.A."/>
            <person name="Villen J."/>
            <person name="Haas W."/>
            <person name="Sowa M.E."/>
            <person name="Gygi S.P."/>
        </authorList>
    </citation>
    <scope>IDENTIFICATION BY MASS SPECTROMETRY [LARGE SCALE ANALYSIS]</scope>
    <source>
        <tissue>Brown adipose tissue</tissue>
        <tissue>Heart</tissue>
        <tissue>Kidney</tissue>
        <tissue>Liver</tissue>
        <tissue>Lung</tissue>
        <tissue>Pancreas</tissue>
        <tissue>Spleen</tissue>
        <tissue>Testis</tissue>
    </source>
</reference>
<gene>
    <name type="primary">Ttc38</name>
</gene>
<evidence type="ECO:0000303" key="1">
    <source>
    </source>
</evidence>
<evidence type="ECO:0000305" key="2"/>
<name>TTC38_MOUSE</name>